<protein>
    <recommendedName>
        <fullName evidence="3">Large ribosomal subunit protein eL8</fullName>
    </recommendedName>
    <alternativeName>
        <fullName>60S ribosomal protein L7a</fullName>
    </alternativeName>
</protein>
<comment type="function">
    <text evidence="2">Component of the large ribosomal subunit. The ribosome is a large ribonucleoprotein complex responsible for the synthesis of proteins in the cell.</text>
</comment>
<comment type="subunit">
    <text evidence="1 2">Component of the large ribosomal subunit (By similarity). Interacts with CRY1 (By similarity). Interacts with DICER1, AGO2, TARBP2, MOV10 and EIF6; they form a large RNA-induced silencing complex (RISC) (By similarity).</text>
</comment>
<comment type="subcellular location">
    <subcellularLocation>
        <location evidence="2">Cytoplasm</location>
    </subcellularLocation>
</comment>
<comment type="similarity">
    <text evidence="3">Belongs to the eukaryotic ribosomal protein eL8 family.</text>
</comment>
<accession>Q4R5C2</accession>
<reference key="1">
    <citation type="submission" date="2005-06" db="EMBL/GenBank/DDBJ databases">
        <title>DNA sequences of macaque genes expressed in brain or testis and its evolutionary implications.</title>
        <authorList>
            <consortium name="International consortium for macaque cDNA sequencing and analysis"/>
        </authorList>
    </citation>
    <scope>NUCLEOTIDE SEQUENCE [LARGE SCALE MRNA]</scope>
    <source>
        <tissue>Temporal cortex</tissue>
    </source>
</reference>
<proteinExistence type="evidence at transcript level"/>
<organism>
    <name type="scientific">Macaca fascicularis</name>
    <name type="common">Crab-eating macaque</name>
    <name type="synonym">Cynomolgus monkey</name>
    <dbReference type="NCBI Taxonomy" id="9541"/>
    <lineage>
        <taxon>Eukaryota</taxon>
        <taxon>Metazoa</taxon>
        <taxon>Chordata</taxon>
        <taxon>Craniata</taxon>
        <taxon>Vertebrata</taxon>
        <taxon>Euteleostomi</taxon>
        <taxon>Mammalia</taxon>
        <taxon>Eutheria</taxon>
        <taxon>Euarchontoglires</taxon>
        <taxon>Primates</taxon>
        <taxon>Haplorrhini</taxon>
        <taxon>Catarrhini</taxon>
        <taxon>Cercopithecidae</taxon>
        <taxon>Cercopithecinae</taxon>
        <taxon>Macaca</taxon>
    </lineage>
</organism>
<dbReference type="EMBL" id="AB169622">
    <property type="protein sequence ID" value="BAE01703.1"/>
    <property type="molecule type" value="mRNA"/>
</dbReference>
<dbReference type="RefSeq" id="NP_001271886.1">
    <property type="nucleotide sequence ID" value="NM_001284957.1"/>
</dbReference>
<dbReference type="SMR" id="Q4R5C2"/>
<dbReference type="STRING" id="9541.ENSMFAP00000031613"/>
<dbReference type="Ensembl" id="ENSMFAT00000005831.2">
    <property type="protein sequence ID" value="ENSMFAP00000031613.1"/>
    <property type="gene ID" value="ENSMFAG00000036880.2"/>
</dbReference>
<dbReference type="VEuPathDB" id="HostDB:ENSMFAG00000036880"/>
<dbReference type="eggNOG" id="KOG3166">
    <property type="taxonomic scope" value="Eukaryota"/>
</dbReference>
<dbReference type="GeneTree" id="ENSGT00940000153294"/>
<dbReference type="OMA" id="RMVKWPA"/>
<dbReference type="Proteomes" id="UP000233100">
    <property type="component" value="Chromosome 15"/>
</dbReference>
<dbReference type="Bgee" id="ENSMFAG00000036880">
    <property type="expression patterns" value="Expressed in lymph node and 13 other cell types or tissues"/>
</dbReference>
<dbReference type="GO" id="GO:0005737">
    <property type="term" value="C:cytoplasm"/>
    <property type="evidence" value="ECO:0007669"/>
    <property type="project" value="UniProtKB-SubCell"/>
</dbReference>
<dbReference type="GO" id="GO:1990904">
    <property type="term" value="C:ribonucleoprotein complex"/>
    <property type="evidence" value="ECO:0007669"/>
    <property type="project" value="UniProtKB-KW"/>
</dbReference>
<dbReference type="GO" id="GO:0005840">
    <property type="term" value="C:ribosome"/>
    <property type="evidence" value="ECO:0007669"/>
    <property type="project" value="UniProtKB-KW"/>
</dbReference>
<dbReference type="GO" id="GO:0003723">
    <property type="term" value="F:RNA binding"/>
    <property type="evidence" value="ECO:0007669"/>
    <property type="project" value="InterPro"/>
</dbReference>
<dbReference type="GO" id="GO:0042254">
    <property type="term" value="P:ribosome biogenesis"/>
    <property type="evidence" value="ECO:0007669"/>
    <property type="project" value="InterPro"/>
</dbReference>
<dbReference type="FunFam" id="3.30.1330.30:FF:000003">
    <property type="entry name" value="60S ribosomal protein L7a"/>
    <property type="match status" value="1"/>
</dbReference>
<dbReference type="Gene3D" id="3.30.1330.30">
    <property type="match status" value="1"/>
</dbReference>
<dbReference type="InterPro" id="IPR050257">
    <property type="entry name" value="eL8/uL1-like"/>
</dbReference>
<dbReference type="InterPro" id="IPR029064">
    <property type="entry name" value="Ribosomal_eL30-like_sf"/>
</dbReference>
<dbReference type="InterPro" id="IPR004037">
    <property type="entry name" value="Ribosomal_eL8-like_CS"/>
</dbReference>
<dbReference type="InterPro" id="IPR004038">
    <property type="entry name" value="Ribosomal_eL8/eL30/eS12/Gad45"/>
</dbReference>
<dbReference type="InterPro" id="IPR018492">
    <property type="entry name" value="Ribosomal_eL8/Nhp2"/>
</dbReference>
<dbReference type="InterPro" id="IPR001921">
    <property type="entry name" value="Ribosomal_eL8_euk"/>
</dbReference>
<dbReference type="PANTHER" id="PTHR23105">
    <property type="entry name" value="RIBOSOMAL PROTEIN L7AE FAMILY MEMBER"/>
    <property type="match status" value="1"/>
</dbReference>
<dbReference type="Pfam" id="PF01248">
    <property type="entry name" value="Ribosomal_L7Ae"/>
    <property type="match status" value="1"/>
</dbReference>
<dbReference type="PRINTS" id="PR00881">
    <property type="entry name" value="L7ARS6FAMILY"/>
</dbReference>
<dbReference type="PRINTS" id="PR00882">
    <property type="entry name" value="RIBOSOMALL7A"/>
</dbReference>
<dbReference type="SUPFAM" id="SSF55315">
    <property type="entry name" value="L30e-like"/>
    <property type="match status" value="1"/>
</dbReference>
<dbReference type="PROSITE" id="PS01082">
    <property type="entry name" value="RIBOSOMAL_L7AE"/>
    <property type="match status" value="1"/>
</dbReference>
<name>RL7A_MACFA</name>
<sequence length="266" mass="29996">MPKGKKAKGKKVAPAPAVVKKQEAKKVVNPLFEKRPKNFGIGQDIQPKRDLTRFVKWPRYIRLQRQRAILYKRLKVPPAINQFTQALDRQTATQLLKLAHKYRPETKQEKKQRLLARAEKKAAGKGDVPTKRPPVLRAGVNTVTTLVENKKAQLVVIAHDVDPIELVVFLPALCRKMGVPYCIIKGKARLGRLVHRKTCTTVAFTQVNSEDKGALAKLVEAIRTNYNDRYDEIRRHWGGNVLGPKSVARIAKLEKAKAKELATKLG</sequence>
<gene>
    <name type="primary">RPL7A</name>
    <name type="ORF">QtrA-11940</name>
</gene>
<evidence type="ECO:0000250" key="1">
    <source>
        <dbReference type="UniProtKB" id="P12970"/>
    </source>
</evidence>
<evidence type="ECO:0000250" key="2">
    <source>
        <dbReference type="UniProtKB" id="P62424"/>
    </source>
</evidence>
<evidence type="ECO:0000305" key="3"/>
<keyword id="KW-0007">Acetylation</keyword>
<keyword id="KW-0963">Cytoplasm</keyword>
<keyword id="KW-1017">Isopeptide bond</keyword>
<keyword id="KW-1185">Reference proteome</keyword>
<keyword id="KW-0687">Ribonucleoprotein</keyword>
<keyword id="KW-0689">Ribosomal protein</keyword>
<keyword id="KW-0832">Ubl conjugation</keyword>
<feature type="chain" id="PRO_0000319303" description="Large ribosomal subunit protein eL8">
    <location>
        <begin position="1"/>
        <end position="266"/>
    </location>
</feature>
<feature type="modified residue" description="N6-acetyllysine" evidence="2">
    <location>
        <position position="34"/>
    </location>
</feature>
<feature type="modified residue" description="N6-acetyllysine; alternate" evidence="2">
    <location>
        <position position="97"/>
    </location>
</feature>
<feature type="modified residue" description="N6-acetyllysine" evidence="2">
    <location>
        <position position="217"/>
    </location>
</feature>
<feature type="cross-link" description="Glycyl lysine isopeptide (Lys-Gly) (interchain with G-Cter in SUMO2)" evidence="2">
    <location>
        <position position="11"/>
    </location>
</feature>
<feature type="cross-link" description="Glycyl lysine isopeptide (Lys-Gly) (interchain with G-Cter in SUMO2)" evidence="2">
    <location>
        <position position="20"/>
    </location>
</feature>
<feature type="cross-link" description="Glycyl lysine isopeptide (Lys-Gly) (interchain with G-Cter in SUMO2)" evidence="2">
    <location>
        <position position="21"/>
    </location>
</feature>
<feature type="cross-link" description="Glycyl lysine isopeptide (Lys-Gly) (interchain with G-Cter in SUMO2)" evidence="2">
    <location>
        <position position="48"/>
    </location>
</feature>
<feature type="cross-link" description="Glycyl lysine isopeptide (Lys-Gly) (interchain with G-Cter in SUMO2); alternate" evidence="2">
    <location>
        <position position="97"/>
    </location>
</feature>
<feature type="cross-link" description="Glycyl lysine isopeptide (Lys-Gly) (interchain with G-Cter in SUMO2)" evidence="2">
    <location>
        <position position="125"/>
    </location>
</feature>
<feature type="cross-link" description="Glycyl lysine isopeptide (Lys-Gly) (interchain with G-Cter in SUMO2)" evidence="2">
    <location>
        <position position="245"/>
    </location>
</feature>